<name>GLPE_PSEPF</name>
<feature type="chain" id="PRO_1000062973" description="Thiosulfate sulfurtransferase GlpE">
    <location>
        <begin position="1"/>
        <end position="109"/>
    </location>
</feature>
<feature type="domain" description="Rhodanese" evidence="1">
    <location>
        <begin position="16"/>
        <end position="104"/>
    </location>
</feature>
<feature type="active site" description="Cysteine persulfide intermediate" evidence="1">
    <location>
        <position position="64"/>
    </location>
</feature>
<keyword id="KW-0963">Cytoplasm</keyword>
<keyword id="KW-0808">Transferase</keyword>
<comment type="function">
    <text evidence="1">Transferase that catalyzes the transfer of sulfur from thiosulfate to thiophilic acceptors such as cyanide or dithiols. May function in a CysM-independent thiosulfate assimilation pathway by catalyzing the conversion of thiosulfate to sulfite, which can then be used for L-cysteine biosynthesis.</text>
</comment>
<comment type="catalytic activity">
    <reaction evidence="1">
        <text>thiosulfate + hydrogen cyanide = thiocyanate + sulfite + 2 H(+)</text>
        <dbReference type="Rhea" id="RHEA:16881"/>
        <dbReference type="ChEBI" id="CHEBI:15378"/>
        <dbReference type="ChEBI" id="CHEBI:17359"/>
        <dbReference type="ChEBI" id="CHEBI:18022"/>
        <dbReference type="ChEBI" id="CHEBI:18407"/>
        <dbReference type="ChEBI" id="CHEBI:33542"/>
        <dbReference type="EC" id="2.8.1.1"/>
    </reaction>
</comment>
<comment type="catalytic activity">
    <reaction evidence="1">
        <text>thiosulfate + [thioredoxin]-dithiol = [thioredoxin]-disulfide + hydrogen sulfide + sulfite + 2 H(+)</text>
        <dbReference type="Rhea" id="RHEA:83859"/>
        <dbReference type="Rhea" id="RHEA-COMP:10698"/>
        <dbReference type="Rhea" id="RHEA-COMP:10700"/>
        <dbReference type="ChEBI" id="CHEBI:15378"/>
        <dbReference type="ChEBI" id="CHEBI:17359"/>
        <dbReference type="ChEBI" id="CHEBI:29919"/>
        <dbReference type="ChEBI" id="CHEBI:29950"/>
        <dbReference type="ChEBI" id="CHEBI:33542"/>
        <dbReference type="ChEBI" id="CHEBI:50058"/>
    </reaction>
</comment>
<comment type="subcellular location">
    <subcellularLocation>
        <location evidence="1">Cytoplasm</location>
    </subcellularLocation>
</comment>
<comment type="similarity">
    <text evidence="1">Belongs to the GlpE family.</text>
</comment>
<dbReference type="EC" id="2.8.1.1" evidence="1"/>
<dbReference type="EMBL" id="CP000094">
    <property type="protein sequence ID" value="ABA76875.1"/>
    <property type="molecule type" value="Genomic_DNA"/>
</dbReference>
<dbReference type="RefSeq" id="WP_007959911.1">
    <property type="nucleotide sequence ID" value="NC_007492.2"/>
</dbReference>
<dbReference type="SMR" id="Q3K5S9"/>
<dbReference type="KEGG" id="pfo:Pfl01_5138"/>
<dbReference type="eggNOG" id="COG0607">
    <property type="taxonomic scope" value="Bacteria"/>
</dbReference>
<dbReference type="HOGENOM" id="CLU_089574_14_0_6"/>
<dbReference type="Proteomes" id="UP000002704">
    <property type="component" value="Chromosome"/>
</dbReference>
<dbReference type="GO" id="GO:0005737">
    <property type="term" value="C:cytoplasm"/>
    <property type="evidence" value="ECO:0007669"/>
    <property type="project" value="UniProtKB-SubCell"/>
</dbReference>
<dbReference type="GO" id="GO:0004792">
    <property type="term" value="F:thiosulfate-cyanide sulfurtransferase activity"/>
    <property type="evidence" value="ECO:0007669"/>
    <property type="project" value="UniProtKB-UniRule"/>
</dbReference>
<dbReference type="GO" id="GO:0006071">
    <property type="term" value="P:glycerol metabolic process"/>
    <property type="evidence" value="ECO:0007669"/>
    <property type="project" value="UniProtKB-UniRule"/>
</dbReference>
<dbReference type="CDD" id="cd01444">
    <property type="entry name" value="GlpE_ST"/>
    <property type="match status" value="1"/>
</dbReference>
<dbReference type="Gene3D" id="3.40.250.10">
    <property type="entry name" value="Rhodanese-like domain"/>
    <property type="match status" value="1"/>
</dbReference>
<dbReference type="HAMAP" id="MF_01009">
    <property type="entry name" value="Thiosulf_sulfurtr"/>
    <property type="match status" value="1"/>
</dbReference>
<dbReference type="InterPro" id="IPR050229">
    <property type="entry name" value="GlpE_sulfurtransferase"/>
</dbReference>
<dbReference type="InterPro" id="IPR001763">
    <property type="entry name" value="Rhodanese-like_dom"/>
</dbReference>
<dbReference type="InterPro" id="IPR036873">
    <property type="entry name" value="Rhodanese-like_dom_sf"/>
</dbReference>
<dbReference type="InterPro" id="IPR023695">
    <property type="entry name" value="Thiosulf_sulfurTrfase"/>
</dbReference>
<dbReference type="NCBIfam" id="NF001195">
    <property type="entry name" value="PRK00162.1"/>
    <property type="match status" value="1"/>
</dbReference>
<dbReference type="PANTHER" id="PTHR43031">
    <property type="entry name" value="FAD-DEPENDENT OXIDOREDUCTASE"/>
    <property type="match status" value="1"/>
</dbReference>
<dbReference type="PANTHER" id="PTHR43031:SF6">
    <property type="entry name" value="THIOSULFATE SULFURTRANSFERASE GLPE"/>
    <property type="match status" value="1"/>
</dbReference>
<dbReference type="Pfam" id="PF00581">
    <property type="entry name" value="Rhodanese"/>
    <property type="match status" value="1"/>
</dbReference>
<dbReference type="SMART" id="SM00450">
    <property type="entry name" value="RHOD"/>
    <property type="match status" value="1"/>
</dbReference>
<dbReference type="SUPFAM" id="SSF52821">
    <property type="entry name" value="Rhodanese/Cell cycle control phosphatase"/>
    <property type="match status" value="1"/>
</dbReference>
<dbReference type="PROSITE" id="PS50206">
    <property type="entry name" value="RHODANESE_3"/>
    <property type="match status" value="1"/>
</dbReference>
<organism>
    <name type="scientific">Pseudomonas fluorescens (strain Pf0-1)</name>
    <dbReference type="NCBI Taxonomy" id="205922"/>
    <lineage>
        <taxon>Bacteria</taxon>
        <taxon>Pseudomonadati</taxon>
        <taxon>Pseudomonadota</taxon>
        <taxon>Gammaproteobacteria</taxon>
        <taxon>Pseudomonadales</taxon>
        <taxon>Pseudomonadaceae</taxon>
        <taxon>Pseudomonas</taxon>
    </lineage>
</organism>
<evidence type="ECO:0000255" key="1">
    <source>
        <dbReference type="HAMAP-Rule" id="MF_01009"/>
    </source>
</evidence>
<reference key="1">
    <citation type="journal article" date="2009" name="Genome Biol.">
        <title>Genomic and genetic analyses of diversity and plant interactions of Pseudomonas fluorescens.</title>
        <authorList>
            <person name="Silby M.W."/>
            <person name="Cerdeno-Tarraga A.M."/>
            <person name="Vernikos G.S."/>
            <person name="Giddens S.R."/>
            <person name="Jackson R.W."/>
            <person name="Preston G.M."/>
            <person name="Zhang X.-X."/>
            <person name="Moon C.D."/>
            <person name="Gehrig S.M."/>
            <person name="Godfrey S.A.C."/>
            <person name="Knight C.G."/>
            <person name="Malone J.G."/>
            <person name="Robinson Z."/>
            <person name="Spiers A.J."/>
            <person name="Harris S."/>
            <person name="Challis G.L."/>
            <person name="Yaxley A.M."/>
            <person name="Harris D."/>
            <person name="Seeger K."/>
            <person name="Murphy L."/>
            <person name="Rutter S."/>
            <person name="Squares R."/>
            <person name="Quail M.A."/>
            <person name="Saunders E."/>
            <person name="Mavromatis K."/>
            <person name="Brettin T.S."/>
            <person name="Bentley S.D."/>
            <person name="Hothersall J."/>
            <person name="Stephens E."/>
            <person name="Thomas C.M."/>
            <person name="Parkhill J."/>
            <person name="Levy S.B."/>
            <person name="Rainey P.B."/>
            <person name="Thomson N.R."/>
        </authorList>
    </citation>
    <scope>NUCLEOTIDE SEQUENCE [LARGE SCALE GENOMIC DNA]</scope>
    <source>
        <strain>Pf0-1</strain>
    </source>
</reference>
<sequence>MSEFKRIPPEQAQALREQGAVVVDVRDPATFAALHISGSKHLDNHSLHAFIQGADLDAPTVVVCYHGNSSQGAAAYLVSQGFSDVYSMDGGFELWRTTFPSETAQGTSE</sequence>
<gene>
    <name evidence="1" type="primary">glpE</name>
    <name type="ordered locus">Pfl01_5138</name>
</gene>
<accession>Q3K5S9</accession>
<protein>
    <recommendedName>
        <fullName evidence="1">Thiosulfate sulfurtransferase GlpE</fullName>
        <ecNumber evidence="1">2.8.1.1</ecNumber>
    </recommendedName>
</protein>
<proteinExistence type="inferred from homology"/>